<protein>
    <recommendedName>
        <fullName>Lutropin subunit beta</fullName>
        <shortName>Lutropin beta chain</shortName>
    </recommendedName>
    <alternativeName>
        <fullName>Luteinizing hormone subunit beta</fullName>
        <shortName>LH-B</shortName>
        <shortName>LSH-B</shortName>
        <shortName>LSH-beta</shortName>
    </alternativeName>
</protein>
<accession>Q9BDI9</accession>
<name>LSHB_PANTA</name>
<dbReference type="EMBL" id="AF354938">
    <property type="protein sequence ID" value="AAK30589.1"/>
    <property type="molecule type" value="mRNA"/>
</dbReference>
<dbReference type="EMBL" id="AF540935">
    <property type="protein sequence ID" value="AAN28376.1"/>
    <property type="molecule type" value="mRNA"/>
</dbReference>
<dbReference type="SMR" id="Q9BDI9"/>
<dbReference type="GlyCosmos" id="Q9BDI9">
    <property type="glycosylation" value="1 site, No reported glycans"/>
</dbReference>
<dbReference type="Proteomes" id="UP000675900">
    <property type="component" value="Unplaced"/>
</dbReference>
<dbReference type="GO" id="GO:0005737">
    <property type="term" value="C:cytoplasm"/>
    <property type="evidence" value="ECO:0007669"/>
    <property type="project" value="TreeGrafter"/>
</dbReference>
<dbReference type="GO" id="GO:0005615">
    <property type="term" value="C:extracellular space"/>
    <property type="evidence" value="ECO:0007669"/>
    <property type="project" value="TreeGrafter"/>
</dbReference>
<dbReference type="GO" id="GO:0005179">
    <property type="term" value="F:hormone activity"/>
    <property type="evidence" value="ECO:0007669"/>
    <property type="project" value="UniProtKB-KW"/>
</dbReference>
<dbReference type="GO" id="GO:0007186">
    <property type="term" value="P:G protein-coupled receptor signaling pathway"/>
    <property type="evidence" value="ECO:0007669"/>
    <property type="project" value="TreeGrafter"/>
</dbReference>
<dbReference type="CDD" id="cd00069">
    <property type="entry name" value="GHB_like"/>
    <property type="match status" value="1"/>
</dbReference>
<dbReference type="FunFam" id="2.10.90.10:FF:000007">
    <property type="entry name" value="Luteinizing hormone beta subunit"/>
    <property type="match status" value="1"/>
</dbReference>
<dbReference type="Gene3D" id="2.10.90.10">
    <property type="entry name" value="Cystine-knot cytokines"/>
    <property type="match status" value="1"/>
</dbReference>
<dbReference type="InterPro" id="IPR029034">
    <property type="entry name" value="Cystine-knot_cytokine"/>
</dbReference>
<dbReference type="InterPro" id="IPR006208">
    <property type="entry name" value="Glyco_hormone_CN"/>
</dbReference>
<dbReference type="InterPro" id="IPR001545">
    <property type="entry name" value="Gonadotropin_bsu"/>
</dbReference>
<dbReference type="InterPro" id="IPR018245">
    <property type="entry name" value="Gonadotropin_bsu_CS"/>
</dbReference>
<dbReference type="PANTHER" id="PTHR11515">
    <property type="entry name" value="GLYCOPROTEIN HORMONE BETA CHAIN"/>
    <property type="match status" value="1"/>
</dbReference>
<dbReference type="PANTHER" id="PTHR11515:SF11">
    <property type="entry name" value="LUTROPIN SUBUNIT BETA"/>
    <property type="match status" value="1"/>
</dbReference>
<dbReference type="Pfam" id="PF00007">
    <property type="entry name" value="Cys_knot"/>
    <property type="match status" value="1"/>
</dbReference>
<dbReference type="SMART" id="SM00068">
    <property type="entry name" value="GHB"/>
    <property type="match status" value="1"/>
</dbReference>
<dbReference type="SUPFAM" id="SSF57501">
    <property type="entry name" value="Cystine-knot cytokines"/>
    <property type="match status" value="1"/>
</dbReference>
<dbReference type="PROSITE" id="PS00261">
    <property type="entry name" value="GLYCO_HORMONE_BETA_1"/>
    <property type="match status" value="1"/>
</dbReference>
<dbReference type="PROSITE" id="PS00689">
    <property type="entry name" value="GLYCO_HORMONE_BETA_2"/>
    <property type="match status" value="1"/>
</dbReference>
<sequence length="142" mass="15117">MEMLQGLLLLWLLLNVGGVWTSRGPLRPLCRPINATLAAENEACPVCVTFTTTICAGYCPSMMRVLPAALPPVPQPVCTYRELRFASVRLPGCPPGVDPVVSFPVALSCRCGPCRLSSSDCGGPRAQPLACDRPPLPGLPFL</sequence>
<evidence type="ECO:0000250" key="1"/>
<evidence type="ECO:0000255" key="2"/>
<evidence type="ECO:0000305" key="3"/>
<keyword id="KW-1015">Disulfide bond</keyword>
<keyword id="KW-0325">Glycoprotein</keyword>
<keyword id="KW-0372">Hormone</keyword>
<keyword id="KW-1185">Reference proteome</keyword>
<keyword id="KW-0964">Secreted</keyword>
<keyword id="KW-0732">Signal</keyword>
<reference key="1">
    <citation type="journal article" date="2003" name="Biol. Reprod.">
        <title>Efficacy of porcine gonadotropins for repeated stimulation of ovarian activity for oocyte retrieval and in vitro embryo production and cryopreservation in Siberian tigers (Panthera tigris altaica).</title>
        <authorList>
            <person name="Crichton E.G."/>
            <person name="Bedows E."/>
            <person name="Miller-Lindholm A.K."/>
            <person name="Baldwin D.M."/>
            <person name="Armstrong D.L."/>
            <person name="Graham L.H."/>
            <person name="Ford J.J."/>
            <person name="Gjorret J.O."/>
            <person name="Hyttel P."/>
            <person name="Pope C.E."/>
            <person name="Vajta G."/>
            <person name="Loskutoff N.M."/>
        </authorList>
    </citation>
    <scope>NUCLEOTIDE SEQUENCE [MRNA]</scope>
    <source>
        <tissue>Pituitary</tissue>
    </source>
</reference>
<reference key="2">
    <citation type="submission" date="2002-08" db="EMBL/GenBank/DDBJ databases">
        <title>Cloning of follicle-stimulating hormone (FSH) and luteinizing hormone (LH) genes in Panthera tigris altaica.</title>
        <authorList>
            <person name="Liao M."/>
            <person name="Zhu M."/>
            <person name="Zhang A."/>
        </authorList>
    </citation>
    <scope>NUCLEOTIDE SEQUENCE [MRNA]</scope>
    <source>
        <tissue>Pituitary</tissue>
    </source>
</reference>
<organism>
    <name type="scientific">Panthera tigris altaica</name>
    <name type="common">Siberian tiger</name>
    <dbReference type="NCBI Taxonomy" id="74533"/>
    <lineage>
        <taxon>Eukaryota</taxon>
        <taxon>Metazoa</taxon>
        <taxon>Chordata</taxon>
        <taxon>Craniata</taxon>
        <taxon>Vertebrata</taxon>
        <taxon>Euteleostomi</taxon>
        <taxon>Mammalia</taxon>
        <taxon>Eutheria</taxon>
        <taxon>Laurasiatheria</taxon>
        <taxon>Carnivora</taxon>
        <taxon>Feliformia</taxon>
        <taxon>Felidae</taxon>
        <taxon>Pantherinae</taxon>
        <taxon>Panthera</taxon>
    </lineage>
</organism>
<comment type="function">
    <text evidence="1">Promotes spermatogenesis and ovulation by stimulating the testes and ovaries to synthesize steroids.</text>
</comment>
<comment type="subunit">
    <text evidence="1">Heterodimer of a common alpha chain and a unique beta chain which confers biological specificity to thyrotropin, lutropin, follitropin and gonadotropin.</text>
</comment>
<comment type="subcellular location">
    <subcellularLocation>
        <location>Secreted</location>
    </subcellularLocation>
</comment>
<comment type="similarity">
    <text evidence="3">Belongs to the glycoprotein hormones subunit beta family.</text>
</comment>
<feature type="signal peptide" evidence="2">
    <location>
        <begin position="1"/>
        <end position="21"/>
    </location>
</feature>
<feature type="chain" id="PRO_0000042867" description="Lutropin subunit beta">
    <location>
        <begin position="22"/>
        <end position="142"/>
    </location>
</feature>
<feature type="glycosylation site" description="N-linked (GlcNAc...) asparagine" evidence="2">
    <location>
        <position position="34"/>
    </location>
</feature>
<feature type="disulfide bond" evidence="1">
    <location>
        <begin position="30"/>
        <end position="78"/>
    </location>
</feature>
<feature type="disulfide bond" evidence="1">
    <location>
        <begin position="44"/>
        <end position="93"/>
    </location>
</feature>
<feature type="disulfide bond" evidence="1">
    <location>
        <begin position="47"/>
        <end position="131"/>
    </location>
</feature>
<feature type="disulfide bond" evidence="1">
    <location>
        <begin position="55"/>
        <end position="109"/>
    </location>
</feature>
<feature type="disulfide bond" evidence="1">
    <location>
        <begin position="59"/>
        <end position="111"/>
    </location>
</feature>
<feature type="disulfide bond" evidence="1">
    <location>
        <begin position="114"/>
        <end position="121"/>
    </location>
</feature>
<proteinExistence type="evidence at transcript level"/>
<gene>
    <name type="primary">LHB</name>
</gene>